<protein>
    <recommendedName>
        <fullName evidence="1">Phosphoenolpyruvate guanylyltransferase</fullName>
        <shortName evidence="1">PEP guanylyltransferase</shortName>
        <ecNumber evidence="1">2.7.7.105</ecNumber>
    </recommendedName>
</protein>
<accession>A4TE28</accession>
<sequence>MRNSAPDADIGLVIAVKRLTAAKTRLAPVLSATNRESVVLAMLVDTIGAAITVPAVRSVLVVTPDDGAASAARRLGARVLADPTPAGHRDPLNNALSAAETAIREECSNIVVLQGDLPALKSIELAEALHAARAHPRSFVTDRHGTGTAALFAFGVALQPRFGAGSAQRHRESGAVELTGDWPGLRSDIDTPEDLVAACELGVGPATSQAISAA</sequence>
<proteinExistence type="inferred from homology"/>
<gene>
    <name evidence="1" type="primary">fbiD</name>
    <name type="ordered locus">Mflv_4222</name>
</gene>
<dbReference type="EC" id="2.7.7.105" evidence="1"/>
<dbReference type="EMBL" id="CP000656">
    <property type="protein sequence ID" value="ABP46691.1"/>
    <property type="molecule type" value="Genomic_DNA"/>
</dbReference>
<dbReference type="SMR" id="A4TE28"/>
<dbReference type="STRING" id="350054.Mflv_4222"/>
<dbReference type="KEGG" id="mgi:Mflv_4222"/>
<dbReference type="eggNOG" id="COG1920">
    <property type="taxonomic scope" value="Bacteria"/>
</dbReference>
<dbReference type="HOGENOM" id="CLU_076569_0_0_11"/>
<dbReference type="OrthoDB" id="9151145at2"/>
<dbReference type="UniPathway" id="UPA00071"/>
<dbReference type="GO" id="GO:0005525">
    <property type="term" value="F:GTP binding"/>
    <property type="evidence" value="ECO:0007669"/>
    <property type="project" value="UniProtKB-KW"/>
</dbReference>
<dbReference type="GO" id="GO:0043814">
    <property type="term" value="F:phospholactate guanylyltransferase activity"/>
    <property type="evidence" value="ECO:0007669"/>
    <property type="project" value="InterPro"/>
</dbReference>
<dbReference type="GO" id="GO:0052645">
    <property type="term" value="P:F420-0 metabolic process"/>
    <property type="evidence" value="ECO:0007669"/>
    <property type="project" value="UniProtKB-UniRule"/>
</dbReference>
<dbReference type="Gene3D" id="3.90.550.10">
    <property type="entry name" value="Spore Coat Polysaccharide Biosynthesis Protein SpsA, Chain A"/>
    <property type="match status" value="1"/>
</dbReference>
<dbReference type="HAMAP" id="MF_02114">
    <property type="entry name" value="CofC"/>
    <property type="match status" value="1"/>
</dbReference>
<dbReference type="InterPro" id="IPR002835">
    <property type="entry name" value="CofC"/>
</dbReference>
<dbReference type="InterPro" id="IPR029044">
    <property type="entry name" value="Nucleotide-diphossugar_trans"/>
</dbReference>
<dbReference type="NCBIfam" id="TIGR03552">
    <property type="entry name" value="F420_cofC"/>
    <property type="match status" value="1"/>
</dbReference>
<dbReference type="PANTHER" id="PTHR40392">
    <property type="entry name" value="2-PHOSPHO-L-LACTATE GUANYLYLTRANSFERASE"/>
    <property type="match status" value="1"/>
</dbReference>
<dbReference type="PANTHER" id="PTHR40392:SF1">
    <property type="entry name" value="2-PHOSPHO-L-LACTATE GUANYLYLTRANSFERASE"/>
    <property type="match status" value="1"/>
</dbReference>
<dbReference type="Pfam" id="PF01983">
    <property type="entry name" value="CofC"/>
    <property type="match status" value="1"/>
</dbReference>
<dbReference type="SUPFAM" id="SSF53448">
    <property type="entry name" value="Nucleotide-diphospho-sugar transferases"/>
    <property type="match status" value="1"/>
</dbReference>
<organism>
    <name type="scientific">Mycolicibacterium gilvum (strain PYR-GCK)</name>
    <name type="common">Mycobacterium gilvum (strain PYR-GCK)</name>
    <dbReference type="NCBI Taxonomy" id="350054"/>
    <lineage>
        <taxon>Bacteria</taxon>
        <taxon>Bacillati</taxon>
        <taxon>Actinomycetota</taxon>
        <taxon>Actinomycetes</taxon>
        <taxon>Mycobacteriales</taxon>
        <taxon>Mycobacteriaceae</taxon>
        <taxon>Mycolicibacterium</taxon>
    </lineage>
</organism>
<evidence type="ECO:0000255" key="1">
    <source>
        <dbReference type="HAMAP-Rule" id="MF_02114"/>
    </source>
</evidence>
<feature type="chain" id="PRO_0000398690" description="Phosphoenolpyruvate guanylyltransferase">
    <location>
        <begin position="1"/>
        <end position="214"/>
    </location>
</feature>
<feature type="binding site" evidence="1">
    <location>
        <position position="148"/>
    </location>
    <ligand>
        <name>phosphoenolpyruvate</name>
        <dbReference type="ChEBI" id="CHEBI:58702"/>
    </ligand>
</feature>
<feature type="binding site" evidence="1">
    <location>
        <position position="163"/>
    </location>
    <ligand>
        <name>phosphoenolpyruvate</name>
        <dbReference type="ChEBI" id="CHEBI:58702"/>
    </ligand>
</feature>
<feature type="binding site" evidence="1">
    <location>
        <position position="166"/>
    </location>
    <ligand>
        <name>phosphoenolpyruvate</name>
        <dbReference type="ChEBI" id="CHEBI:58702"/>
    </ligand>
</feature>
<keyword id="KW-0342">GTP-binding</keyword>
<keyword id="KW-0547">Nucleotide-binding</keyword>
<keyword id="KW-0548">Nucleotidyltransferase</keyword>
<keyword id="KW-0808">Transferase</keyword>
<comment type="function">
    <text evidence="1">Guanylyltransferase that catalyzes the activation of phosphoenolpyruvate (PEP) as enolpyruvoyl-2-diphospho-5'-guanosine, via the condensation of PEP with GTP. It is involved in the biosynthesis of coenzyme F420, a hydride carrier cofactor.</text>
</comment>
<comment type="catalytic activity">
    <reaction evidence="1">
        <text>phosphoenolpyruvate + GTP + H(+) = enolpyruvoyl-2-diphospho-5'-guanosine + diphosphate</text>
        <dbReference type="Rhea" id="RHEA:30519"/>
        <dbReference type="ChEBI" id="CHEBI:15378"/>
        <dbReference type="ChEBI" id="CHEBI:33019"/>
        <dbReference type="ChEBI" id="CHEBI:37565"/>
        <dbReference type="ChEBI" id="CHEBI:58702"/>
        <dbReference type="ChEBI" id="CHEBI:143701"/>
        <dbReference type="EC" id="2.7.7.105"/>
    </reaction>
</comment>
<comment type="pathway">
    <text evidence="1">Cofactor biosynthesis; coenzyme F420 biosynthesis.</text>
</comment>
<comment type="similarity">
    <text evidence="1">Belongs to the CofC family.</text>
</comment>
<name>FBID_MYCGI</name>
<reference key="1">
    <citation type="submission" date="2007-04" db="EMBL/GenBank/DDBJ databases">
        <title>Complete sequence of chromosome of Mycobacterium gilvum PYR-GCK.</title>
        <authorList>
            <consortium name="US DOE Joint Genome Institute"/>
            <person name="Copeland A."/>
            <person name="Lucas S."/>
            <person name="Lapidus A."/>
            <person name="Barry K."/>
            <person name="Detter J.C."/>
            <person name="Glavina del Rio T."/>
            <person name="Hammon N."/>
            <person name="Israni S."/>
            <person name="Dalin E."/>
            <person name="Tice H."/>
            <person name="Pitluck S."/>
            <person name="Chain P."/>
            <person name="Malfatti S."/>
            <person name="Shin M."/>
            <person name="Vergez L."/>
            <person name="Schmutz J."/>
            <person name="Larimer F."/>
            <person name="Land M."/>
            <person name="Hauser L."/>
            <person name="Kyrpides N."/>
            <person name="Mikhailova N."/>
            <person name="Miller C."/>
            <person name="Richardson P."/>
        </authorList>
    </citation>
    <scope>NUCLEOTIDE SEQUENCE [LARGE SCALE GENOMIC DNA]</scope>
    <source>
        <strain>PYR-GCK</strain>
    </source>
</reference>